<sequence>MIAVLFSFVIAGCIYYIVSRRVRRSRLPPGPPGIPIPFIGNMFDMPEESPWLTFLQWGRDYNTDILYVDAGGTEMVILNTLETITDLLEKRGSIYSGRLESTMVNELMGWEFDLGFITYGDRWREERRMFAKEFSEKGIKQFRHAQVKAAHQLVQQLTKTPDRWAQHIRHQIAAMSLDIGYGIDLAEDDPWLEATHLANEGLAIASVPGKFWVDSFPSLKYLPAWFPGAVFKRKAKVWREAADHMVDMPYETMRKLAPQGLTRPSYASARLQAMDLNGDLEHQEHVIKNTAAEVNVGGGDTTVSAMSAFILAMVKYPEVQRKVQAELDALTNNGQIPDYDEEDDSLPYLTACIKELFRWNQIAPLAIPHKLMKDDVYRGYLIPKNTLVFANTWAVLNDPEVYPDPSVFRPERYLGPDGKPDNTVRDPRKAAFGYGRRNCPGIHLAQSTVWIAGATLLSAFNIERPVDQNGKPIDIPADFTTGFFRHPVPFQCRFVPRTEQVSQSVSGP</sequence>
<organism>
    <name type="scientific">Psilocybe cubensis</name>
    <name type="common">Psychedelic mushroom</name>
    <name type="synonym">Stropharia cubensis</name>
    <dbReference type="NCBI Taxonomy" id="181762"/>
    <lineage>
        <taxon>Eukaryota</taxon>
        <taxon>Fungi</taxon>
        <taxon>Dikarya</taxon>
        <taxon>Basidiomycota</taxon>
        <taxon>Agaricomycotina</taxon>
        <taxon>Agaricomycetes</taxon>
        <taxon>Agaricomycetidae</taxon>
        <taxon>Agaricales</taxon>
        <taxon>Agaricineae</taxon>
        <taxon>Strophariaceae</taxon>
        <taxon>Psilocybe</taxon>
    </lineage>
</organism>
<name>PSIH_PSICU</name>
<reference key="1">
    <citation type="journal article" date="2017" name="Angew. Chem. Int. Ed.">
        <title>Enzymatic synthesis of psilocybin.</title>
        <authorList>
            <person name="Fricke J."/>
            <person name="Blei F."/>
            <person name="Hoffmeister D."/>
        </authorList>
    </citation>
    <scope>NUCLEOTIDE SEQUENCE [GENOMIC DNA]</scope>
    <scope>IDENTIFICATION</scope>
    <scope>FUNCTION</scope>
    <scope>CATALYTIC ACTIVITY</scope>
    <scope>PATHWAY</scope>
</reference>
<reference key="2">
    <citation type="journal article" date="2016" name="J. Psychopharmacol.">
        <title>Rapid and sustained symptom reduction following psilocybin treatment for anxiety and depression in patients with life-threatening cancer: a randomized controlled trial.</title>
        <authorList>
            <person name="Ross S."/>
            <person name="Bossis A."/>
            <person name="Guss J."/>
            <person name="Agin-Liebes G."/>
            <person name="Malone T."/>
            <person name="Cohen B."/>
            <person name="Mennenga S.E."/>
            <person name="Belser A."/>
            <person name="Kalliontzi K."/>
            <person name="Babb J."/>
            <person name="Su Z."/>
            <person name="Corby P."/>
            <person name="Schmidt B.L."/>
        </authorList>
    </citation>
    <scope>BIOTECHNOLOGY</scope>
</reference>
<feature type="signal peptide" evidence="2">
    <location>
        <begin position="1"/>
        <end position="19"/>
    </location>
</feature>
<feature type="chain" id="PRO_0000442158" description="Tryptamine 4-monooxygenase">
    <location>
        <begin position="20"/>
        <end position="508"/>
    </location>
</feature>
<feature type="binding site" description="axial binding residue" evidence="1">
    <location>
        <position position="439"/>
    </location>
    <ligand>
        <name>heme</name>
        <dbReference type="ChEBI" id="CHEBI:30413"/>
    </ligand>
    <ligandPart>
        <name>Fe</name>
        <dbReference type="ChEBI" id="CHEBI:18248"/>
    </ligandPart>
</feature>
<dbReference type="EC" id="1.14.99.59" evidence="4"/>
<dbReference type="EMBL" id="MF000993">
    <property type="protein sequence ID" value="ASU62246.1"/>
    <property type="molecule type" value="Genomic_RNA"/>
</dbReference>
<dbReference type="SMR" id="P0DPA7"/>
<dbReference type="KEGG" id="ag:ASU62246"/>
<dbReference type="BRENDA" id="1.14.99.59">
    <property type="organism ID" value="15552"/>
</dbReference>
<dbReference type="GO" id="GO:0020037">
    <property type="term" value="F:heme binding"/>
    <property type="evidence" value="ECO:0007669"/>
    <property type="project" value="InterPro"/>
</dbReference>
<dbReference type="GO" id="GO:0005506">
    <property type="term" value="F:iron ion binding"/>
    <property type="evidence" value="ECO:0007669"/>
    <property type="project" value="InterPro"/>
</dbReference>
<dbReference type="GO" id="GO:0016705">
    <property type="term" value="F:oxidoreductase activity, acting on paired donors, with incorporation or reduction of molecular oxygen"/>
    <property type="evidence" value="ECO:0007669"/>
    <property type="project" value="InterPro"/>
</dbReference>
<dbReference type="GO" id="GO:0140382">
    <property type="term" value="F:tryptamine 4-monooxygenase activity"/>
    <property type="evidence" value="ECO:0000314"/>
    <property type="project" value="UniProt"/>
</dbReference>
<dbReference type="GO" id="GO:0140380">
    <property type="term" value="P:psilocybin biosynthetic process"/>
    <property type="evidence" value="ECO:0000314"/>
    <property type="project" value="GO_Central"/>
</dbReference>
<dbReference type="CDD" id="cd11065">
    <property type="entry name" value="CYP64-like"/>
    <property type="match status" value="1"/>
</dbReference>
<dbReference type="Gene3D" id="1.10.630.10">
    <property type="entry name" value="Cytochrome P450"/>
    <property type="match status" value="1"/>
</dbReference>
<dbReference type="InterPro" id="IPR001128">
    <property type="entry name" value="Cyt_P450"/>
</dbReference>
<dbReference type="InterPro" id="IPR017972">
    <property type="entry name" value="Cyt_P450_CS"/>
</dbReference>
<dbReference type="InterPro" id="IPR002401">
    <property type="entry name" value="Cyt_P450_E_grp-I"/>
</dbReference>
<dbReference type="InterPro" id="IPR036396">
    <property type="entry name" value="Cyt_P450_sf"/>
</dbReference>
<dbReference type="InterPro" id="IPR050364">
    <property type="entry name" value="Cytochrome_P450_fung"/>
</dbReference>
<dbReference type="PANTHER" id="PTHR46300:SF7">
    <property type="entry name" value="P450, PUTATIVE (EUROFUNG)-RELATED"/>
    <property type="match status" value="1"/>
</dbReference>
<dbReference type="PANTHER" id="PTHR46300">
    <property type="entry name" value="P450, PUTATIVE (EUROFUNG)-RELATED-RELATED"/>
    <property type="match status" value="1"/>
</dbReference>
<dbReference type="Pfam" id="PF00067">
    <property type="entry name" value="p450"/>
    <property type="match status" value="1"/>
</dbReference>
<dbReference type="PRINTS" id="PR00463">
    <property type="entry name" value="EP450I"/>
</dbReference>
<dbReference type="SUPFAM" id="SSF48264">
    <property type="entry name" value="Cytochrome P450"/>
    <property type="match status" value="1"/>
</dbReference>
<dbReference type="PROSITE" id="PS00086">
    <property type="entry name" value="CYTOCHROME_P450"/>
    <property type="match status" value="1"/>
</dbReference>
<proteinExistence type="evidence at protein level"/>
<evidence type="ECO:0000250" key="1">
    <source>
        <dbReference type="UniProtKB" id="P04798"/>
    </source>
</evidence>
<evidence type="ECO:0000255" key="2"/>
<evidence type="ECO:0000269" key="3">
    <source>
    </source>
</evidence>
<evidence type="ECO:0000269" key="4">
    <source>
    </source>
</evidence>
<evidence type="ECO:0000303" key="5">
    <source>
    </source>
</evidence>
<evidence type="ECO:0000305" key="6"/>
<comment type="function">
    <text evidence="4">Cytochrome P450 monooxygenase; part of the gene cluster that mediates the biosynthesis of psilocybin, a psychotropic tryptamine-derived natural product (PubMed:28763571). The first step in the pathway is the decarboxylation of L-tryptophan to tryptamine by the decarboxylase psiD (PubMed:28763571). 4-hydroxy-L-tryptophan is accepted as substrate by psiD as well (PubMed:28763571). The cytochrome P450 monooxygenase psiH then converts tryptamine to 4-hydroxytryptamine (PubMed:28763571). The kinase psiK catalyzes the 4-O-phosphorylation step by converting 4-hydroxytryptamine into norbaeocystin (PubMed:28763571). The methyltransferase psiM then catalyzes iterative methyl transfer to the amino group of norbaeocystin to yield psilocybin via a monomethylated intermediate, baeocystin (PubMed:28763571).</text>
</comment>
<comment type="catalytic activity">
    <reaction evidence="4">
        <text>tryptamine + AH2 + O2 = 4-hydroxytryptamine + A + H2O</text>
        <dbReference type="Rhea" id="RHEA:15865"/>
        <dbReference type="ChEBI" id="CHEBI:13193"/>
        <dbReference type="ChEBI" id="CHEBI:15377"/>
        <dbReference type="ChEBI" id="CHEBI:15379"/>
        <dbReference type="ChEBI" id="CHEBI:17499"/>
        <dbReference type="ChEBI" id="CHEBI:57887"/>
        <dbReference type="ChEBI" id="CHEBI:139069"/>
        <dbReference type="EC" id="1.14.99.59"/>
    </reaction>
    <physiologicalReaction direction="left-to-right" evidence="4">
        <dbReference type="Rhea" id="RHEA:15866"/>
    </physiologicalReaction>
</comment>
<comment type="cofactor">
    <cofactor evidence="1">
        <name>heme</name>
        <dbReference type="ChEBI" id="CHEBI:30413"/>
    </cofactor>
</comment>
<comment type="pathway">
    <text evidence="4">Secondary metabolite biosynthesis.</text>
</comment>
<comment type="biotechnology">
    <text evidence="3">The pharmaceutical interesting psilocybin as a treatment option against depression and anxiety is being investigated in advanced clinical trials.</text>
</comment>
<comment type="similarity">
    <text evidence="6">Belongs to the cytochrome P450 family.</text>
</comment>
<comment type="online information" name="Protein Spotlight">
    <link uri="https://www.proteinspotlight.org/back_issues/198/"/>
    <text>When the mind bends - Issue 198 of December 2017</text>
</comment>
<keyword id="KW-0349">Heme</keyword>
<keyword id="KW-0408">Iron</keyword>
<keyword id="KW-0479">Metal-binding</keyword>
<keyword id="KW-0503">Monooxygenase</keyword>
<keyword id="KW-0560">Oxidoreductase</keyword>
<keyword id="KW-0732">Signal</keyword>
<protein>
    <recommendedName>
        <fullName>Tryptamine 4-monooxygenase</fullName>
        <ecNumber evidence="4">1.14.99.59</ecNumber>
    </recommendedName>
    <alternativeName>
        <fullName evidence="5">Cytochrome P450 monooxygenase psiH</fullName>
    </alternativeName>
    <alternativeName>
        <fullName evidence="5">Psilocybin biosynthesis hydroxylase</fullName>
    </alternativeName>
</protein>
<accession>P0DPA7</accession>
<gene>
    <name evidence="5" type="primary">psiH</name>
</gene>